<gene>
    <name evidence="1" type="primary">argR2</name>
    <name type="ordered locus">SpyM3_1808</name>
</gene>
<protein>
    <recommendedName>
        <fullName evidence="1">Arginine repressor</fullName>
    </recommendedName>
</protein>
<organism>
    <name type="scientific">Streptococcus pyogenes serotype M3 (strain ATCC BAA-595 / MGAS315)</name>
    <dbReference type="NCBI Taxonomy" id="198466"/>
    <lineage>
        <taxon>Bacteria</taxon>
        <taxon>Bacillati</taxon>
        <taxon>Bacillota</taxon>
        <taxon>Bacilli</taxon>
        <taxon>Lactobacillales</taxon>
        <taxon>Streptococcaceae</taxon>
        <taxon>Streptococcus</taxon>
    </lineage>
</organism>
<dbReference type="EMBL" id="AE014074">
    <property type="protein sequence ID" value="AAM80415.1"/>
    <property type="molecule type" value="Genomic_DNA"/>
</dbReference>
<dbReference type="SMR" id="P0CZ70"/>
<dbReference type="KEGG" id="spg:SpyM3_1808"/>
<dbReference type="HOGENOM" id="CLU_097103_3_0_9"/>
<dbReference type="UniPathway" id="UPA00068"/>
<dbReference type="Proteomes" id="UP000000564">
    <property type="component" value="Chromosome"/>
</dbReference>
<dbReference type="GO" id="GO:0005737">
    <property type="term" value="C:cytoplasm"/>
    <property type="evidence" value="ECO:0007669"/>
    <property type="project" value="UniProtKB-SubCell"/>
</dbReference>
<dbReference type="GO" id="GO:0034618">
    <property type="term" value="F:arginine binding"/>
    <property type="evidence" value="ECO:0007669"/>
    <property type="project" value="InterPro"/>
</dbReference>
<dbReference type="GO" id="GO:0003677">
    <property type="term" value="F:DNA binding"/>
    <property type="evidence" value="ECO:0007669"/>
    <property type="project" value="UniProtKB-KW"/>
</dbReference>
<dbReference type="GO" id="GO:0003700">
    <property type="term" value="F:DNA-binding transcription factor activity"/>
    <property type="evidence" value="ECO:0007669"/>
    <property type="project" value="UniProtKB-UniRule"/>
</dbReference>
<dbReference type="GO" id="GO:0006526">
    <property type="term" value="P:L-arginine biosynthetic process"/>
    <property type="evidence" value="ECO:0007669"/>
    <property type="project" value="UniProtKB-UniPathway"/>
</dbReference>
<dbReference type="GO" id="GO:0051259">
    <property type="term" value="P:protein complex oligomerization"/>
    <property type="evidence" value="ECO:0007669"/>
    <property type="project" value="InterPro"/>
</dbReference>
<dbReference type="GO" id="GO:1900079">
    <property type="term" value="P:regulation of arginine biosynthetic process"/>
    <property type="evidence" value="ECO:0007669"/>
    <property type="project" value="UniProtKB-UniRule"/>
</dbReference>
<dbReference type="Gene3D" id="3.30.1360.40">
    <property type="match status" value="1"/>
</dbReference>
<dbReference type="Gene3D" id="1.10.10.10">
    <property type="entry name" value="Winged helix-like DNA-binding domain superfamily/Winged helix DNA-binding domain"/>
    <property type="match status" value="1"/>
</dbReference>
<dbReference type="HAMAP" id="MF_00173">
    <property type="entry name" value="Arg_repressor"/>
    <property type="match status" value="1"/>
</dbReference>
<dbReference type="InterPro" id="IPR001669">
    <property type="entry name" value="Arg_repress"/>
</dbReference>
<dbReference type="InterPro" id="IPR020899">
    <property type="entry name" value="Arg_repress_C"/>
</dbReference>
<dbReference type="InterPro" id="IPR036251">
    <property type="entry name" value="Arg_repress_C_sf"/>
</dbReference>
<dbReference type="InterPro" id="IPR020900">
    <property type="entry name" value="Arg_repress_DNA-bd"/>
</dbReference>
<dbReference type="InterPro" id="IPR036388">
    <property type="entry name" value="WH-like_DNA-bd_sf"/>
</dbReference>
<dbReference type="InterPro" id="IPR036390">
    <property type="entry name" value="WH_DNA-bd_sf"/>
</dbReference>
<dbReference type="NCBIfam" id="TIGR01529">
    <property type="entry name" value="argR_whole"/>
    <property type="match status" value="1"/>
</dbReference>
<dbReference type="PANTHER" id="PTHR34471">
    <property type="entry name" value="ARGININE REPRESSOR"/>
    <property type="match status" value="1"/>
</dbReference>
<dbReference type="PANTHER" id="PTHR34471:SF1">
    <property type="entry name" value="ARGININE REPRESSOR"/>
    <property type="match status" value="1"/>
</dbReference>
<dbReference type="Pfam" id="PF01316">
    <property type="entry name" value="Arg_repressor"/>
    <property type="match status" value="1"/>
</dbReference>
<dbReference type="Pfam" id="PF02863">
    <property type="entry name" value="Arg_repressor_C"/>
    <property type="match status" value="1"/>
</dbReference>
<dbReference type="PRINTS" id="PR01467">
    <property type="entry name" value="ARGREPRESSOR"/>
</dbReference>
<dbReference type="SUPFAM" id="SSF55252">
    <property type="entry name" value="C-terminal domain of arginine repressor"/>
    <property type="match status" value="1"/>
</dbReference>
<dbReference type="SUPFAM" id="SSF46785">
    <property type="entry name" value="Winged helix' DNA-binding domain"/>
    <property type="match status" value="1"/>
</dbReference>
<sequence length="145" mass="16273">MNKMERQQQIKRIIQAEHIGTQEDIKNHLQKEGIVVTQATLSRDLRAIGLLKLRDEQGKLYYSLSEPVATPFSPEVRFYVLKVDRAGFMLVLHTNLGEADVLANLIDNDAIEDILGTIAGADTLLVICRDEEIAKRFEKDLAAGL</sequence>
<proteinExistence type="inferred from homology"/>
<evidence type="ECO:0000255" key="1">
    <source>
        <dbReference type="HAMAP-Rule" id="MF_00173"/>
    </source>
</evidence>
<keyword id="KW-0028">Amino-acid biosynthesis</keyword>
<keyword id="KW-0055">Arginine biosynthesis</keyword>
<keyword id="KW-0963">Cytoplasm</keyword>
<keyword id="KW-0238">DNA-binding</keyword>
<keyword id="KW-0678">Repressor</keyword>
<keyword id="KW-0804">Transcription</keyword>
<keyword id="KW-0805">Transcription regulation</keyword>
<name>ARGR2_STRP3</name>
<feature type="chain" id="PRO_0000205131" description="Arginine repressor">
    <location>
        <begin position="1"/>
        <end position="145"/>
    </location>
</feature>
<comment type="function">
    <text evidence="1">Regulates arginine biosynthesis genes.</text>
</comment>
<comment type="pathway">
    <text>Amino-acid biosynthesis; L-arginine biosynthesis [regulation].</text>
</comment>
<comment type="subcellular location">
    <subcellularLocation>
        <location evidence="1">Cytoplasm</location>
    </subcellularLocation>
</comment>
<comment type="similarity">
    <text evidence="1">Belongs to the ArgR family.</text>
</comment>
<accession>P0CZ70</accession>
<accession>Q79W08</accession>
<accession>Q8K5J3</accession>
<reference key="1">
    <citation type="journal article" date="2002" name="Proc. Natl. Acad. Sci. U.S.A.">
        <title>Genome sequence of a serotype M3 strain of group A Streptococcus: phage-encoded toxins, the high-virulence phenotype, and clone emergence.</title>
        <authorList>
            <person name="Beres S.B."/>
            <person name="Sylva G.L."/>
            <person name="Barbian K.D."/>
            <person name="Lei B."/>
            <person name="Hoff J.S."/>
            <person name="Mammarella N.D."/>
            <person name="Liu M.-Y."/>
            <person name="Smoot J.C."/>
            <person name="Porcella S.F."/>
            <person name="Parkins L.D."/>
            <person name="Campbell D.S."/>
            <person name="Smith T.M."/>
            <person name="McCormick J.K."/>
            <person name="Leung D.Y.M."/>
            <person name="Schlievert P.M."/>
            <person name="Musser J.M."/>
        </authorList>
    </citation>
    <scope>NUCLEOTIDE SEQUENCE [LARGE SCALE GENOMIC DNA]</scope>
    <source>
        <strain>ATCC BAA-595 / MGAS315</strain>
    </source>
</reference>